<reference key="1">
    <citation type="journal article" date="2006" name="Genome Biol.">
        <title>The genome of Rhizobium leguminosarum has recognizable core and accessory components.</title>
        <authorList>
            <person name="Young J.P.W."/>
            <person name="Crossman L.C."/>
            <person name="Johnston A.W.B."/>
            <person name="Thomson N.R."/>
            <person name="Ghazoui Z.F."/>
            <person name="Hull K.H."/>
            <person name="Wexler M."/>
            <person name="Curson A.R.J."/>
            <person name="Todd J.D."/>
            <person name="Poole P.S."/>
            <person name="Mauchline T.H."/>
            <person name="East A.K."/>
            <person name="Quail M.A."/>
            <person name="Churcher C."/>
            <person name="Arrowsmith C."/>
            <person name="Cherevach I."/>
            <person name="Chillingworth T."/>
            <person name="Clarke K."/>
            <person name="Cronin A."/>
            <person name="Davis P."/>
            <person name="Fraser A."/>
            <person name="Hance Z."/>
            <person name="Hauser H."/>
            <person name="Jagels K."/>
            <person name="Moule S."/>
            <person name="Mungall K."/>
            <person name="Norbertczak H."/>
            <person name="Rabbinowitsch E."/>
            <person name="Sanders M."/>
            <person name="Simmonds M."/>
            <person name="Whitehead S."/>
            <person name="Parkhill J."/>
        </authorList>
    </citation>
    <scope>NUCLEOTIDE SEQUENCE [LARGE SCALE GENOMIC DNA]</scope>
    <source>
        <strain>DSM 114642 / LMG 32736 / 3841</strain>
    </source>
</reference>
<sequence length="106" mass="12257">MTLEKHAFKMQLNPGMEAEYRRRHDEIWPELVDLLHKSGASDYSIHLDRETNTLFGVLTRPADHTMASLPEHPVVKKWWAYMADIMATNPDNSPVQSDLVTVFHMP</sequence>
<organism>
    <name type="scientific">Rhizobium johnstonii (strain DSM 114642 / LMG 32736 / 3841)</name>
    <name type="common">Rhizobium leguminosarum bv. viciae</name>
    <dbReference type="NCBI Taxonomy" id="216596"/>
    <lineage>
        <taxon>Bacteria</taxon>
        <taxon>Pseudomonadati</taxon>
        <taxon>Pseudomonadota</taxon>
        <taxon>Alphaproteobacteria</taxon>
        <taxon>Hyphomicrobiales</taxon>
        <taxon>Rhizobiaceae</taxon>
        <taxon>Rhizobium/Agrobacterium group</taxon>
        <taxon>Rhizobium</taxon>
        <taxon>Rhizobium johnstonii</taxon>
    </lineage>
</organism>
<proteinExistence type="inferred from homology"/>
<gene>
    <name evidence="1" type="primary">rhaM</name>
    <name type="ordered locus">pRL110409</name>
</gene>
<geneLocation type="plasmid">
    <name>pRL11</name>
</geneLocation>
<feature type="chain" id="PRO_0000344594" description="L-rhamnose mutarotase">
    <location>
        <begin position="1"/>
        <end position="106"/>
    </location>
</feature>
<feature type="active site" description="Proton donor" evidence="1">
    <location>
        <position position="24"/>
    </location>
</feature>
<feature type="binding site" evidence="1">
    <location>
        <position position="20"/>
    </location>
    <ligand>
        <name>substrate</name>
    </ligand>
</feature>
<feature type="binding site" evidence="1">
    <location>
        <position position="43"/>
    </location>
    <ligand>
        <name>substrate</name>
    </ligand>
</feature>
<feature type="binding site" evidence="1">
    <location>
        <begin position="78"/>
        <end position="79"/>
    </location>
    <ligand>
        <name>substrate</name>
    </ligand>
</feature>
<dbReference type="EC" id="5.1.3.32" evidence="1"/>
<dbReference type="EMBL" id="AM236085">
    <property type="protein sequence ID" value="CAK03362.1"/>
    <property type="molecule type" value="Genomic_DNA"/>
</dbReference>
<dbReference type="RefSeq" id="WP_003547822.1">
    <property type="nucleotide sequence ID" value="NC_008384.1"/>
</dbReference>
<dbReference type="SMR" id="Q1M5X7"/>
<dbReference type="EnsemblBacteria" id="CAK03362">
    <property type="protein sequence ID" value="CAK03362"/>
    <property type="gene ID" value="pRL110409"/>
</dbReference>
<dbReference type="GeneID" id="84673508"/>
<dbReference type="KEGG" id="rle:pRL110409"/>
<dbReference type="HOGENOM" id="CLU_100689_2_0_5"/>
<dbReference type="UniPathway" id="UPA00125"/>
<dbReference type="Proteomes" id="UP000006575">
    <property type="component" value="Plasmid pRL11"/>
</dbReference>
<dbReference type="GO" id="GO:0005737">
    <property type="term" value="C:cytoplasm"/>
    <property type="evidence" value="ECO:0007669"/>
    <property type="project" value="UniProtKB-SubCell"/>
</dbReference>
<dbReference type="GO" id="GO:0062192">
    <property type="term" value="F:L-rhamnose mutarotase activity"/>
    <property type="evidence" value="ECO:0007669"/>
    <property type="project" value="UniProtKB-EC"/>
</dbReference>
<dbReference type="GO" id="GO:0019301">
    <property type="term" value="P:rhamnose catabolic process"/>
    <property type="evidence" value="ECO:0007669"/>
    <property type="project" value="TreeGrafter"/>
</dbReference>
<dbReference type="Gene3D" id="3.30.70.100">
    <property type="match status" value="1"/>
</dbReference>
<dbReference type="HAMAP" id="MF_01663">
    <property type="entry name" value="L_rham_rotase"/>
    <property type="match status" value="1"/>
</dbReference>
<dbReference type="InterPro" id="IPR011008">
    <property type="entry name" value="Dimeric_a/b-barrel"/>
</dbReference>
<dbReference type="InterPro" id="IPR013448">
    <property type="entry name" value="L-rhamnose_mutarotase"/>
</dbReference>
<dbReference type="InterPro" id="IPR008000">
    <property type="entry name" value="Rham/fucose_mutarotase"/>
</dbReference>
<dbReference type="NCBIfam" id="TIGR02625">
    <property type="entry name" value="YiiL_rotase"/>
    <property type="match status" value="1"/>
</dbReference>
<dbReference type="PANTHER" id="PTHR34389">
    <property type="entry name" value="L-RHAMNOSE MUTAROTASE"/>
    <property type="match status" value="1"/>
</dbReference>
<dbReference type="PANTHER" id="PTHR34389:SF2">
    <property type="entry name" value="L-RHAMNOSE MUTAROTASE"/>
    <property type="match status" value="1"/>
</dbReference>
<dbReference type="Pfam" id="PF05336">
    <property type="entry name" value="rhaM"/>
    <property type="match status" value="1"/>
</dbReference>
<dbReference type="SUPFAM" id="SSF54909">
    <property type="entry name" value="Dimeric alpha+beta barrel"/>
    <property type="match status" value="1"/>
</dbReference>
<protein>
    <recommendedName>
        <fullName evidence="1">L-rhamnose mutarotase</fullName>
        <ecNumber evidence="1">5.1.3.32</ecNumber>
    </recommendedName>
    <alternativeName>
        <fullName evidence="1">Rhamnose 1-epimerase</fullName>
    </alternativeName>
    <alternativeName>
        <fullName evidence="1">Type-3 mutarotase</fullName>
    </alternativeName>
</protein>
<keyword id="KW-0119">Carbohydrate metabolism</keyword>
<keyword id="KW-0963">Cytoplasm</keyword>
<keyword id="KW-0413">Isomerase</keyword>
<keyword id="KW-0614">Plasmid</keyword>
<keyword id="KW-0684">Rhamnose metabolism</keyword>
<name>RHAM_RHIJ3</name>
<accession>Q1M5X7</accession>
<evidence type="ECO:0000255" key="1">
    <source>
        <dbReference type="HAMAP-Rule" id="MF_01663"/>
    </source>
</evidence>
<comment type="function">
    <text evidence="1">Involved in the anomeric conversion of L-rhamnose.</text>
</comment>
<comment type="catalytic activity">
    <reaction evidence="1">
        <text>alpha-L-rhamnose = beta-L-rhamnose</text>
        <dbReference type="Rhea" id="RHEA:25584"/>
        <dbReference type="ChEBI" id="CHEBI:27586"/>
        <dbReference type="ChEBI" id="CHEBI:27907"/>
        <dbReference type="EC" id="5.1.3.32"/>
    </reaction>
</comment>
<comment type="pathway">
    <text evidence="1">Carbohydrate metabolism; L-rhamnose metabolism.</text>
</comment>
<comment type="subunit">
    <text evidence="1">Homodimer.</text>
</comment>
<comment type="subcellular location">
    <subcellularLocation>
        <location evidence="1">Cytoplasm</location>
    </subcellularLocation>
</comment>
<comment type="similarity">
    <text evidence="1">Belongs to the rhamnose mutarotase family.</text>
</comment>